<keyword id="KW-0328">Glycosyltransferase</keyword>
<keyword id="KW-0479">Metal-binding</keyword>
<keyword id="KW-0671">Queuosine biosynthesis</keyword>
<keyword id="KW-1185">Reference proteome</keyword>
<keyword id="KW-0808">Transferase</keyword>
<keyword id="KW-0819">tRNA processing</keyword>
<keyword id="KW-0862">Zinc</keyword>
<name>TGT_PASMU</name>
<reference key="1">
    <citation type="journal article" date="2001" name="Proc. Natl. Acad. Sci. U.S.A.">
        <title>Complete genomic sequence of Pasteurella multocida Pm70.</title>
        <authorList>
            <person name="May B.J."/>
            <person name="Zhang Q."/>
            <person name="Li L.L."/>
            <person name="Paustian M.L."/>
            <person name="Whittam T.S."/>
            <person name="Kapur V."/>
        </authorList>
    </citation>
    <scope>NUCLEOTIDE SEQUENCE [LARGE SCALE GENOMIC DNA]</scope>
    <source>
        <strain>Pm70</strain>
    </source>
</reference>
<comment type="function">
    <text evidence="1">Catalyzes the base-exchange of a guanine (G) residue with the queuine precursor 7-aminomethyl-7-deazaguanine (PreQ1) at position 34 (anticodon wobble position) in tRNAs with GU(N) anticodons (tRNA-Asp, -Asn, -His and -Tyr). Catalysis occurs through a double-displacement mechanism. The nucleophile active site attacks the C1' of nucleotide 34 to detach the guanine base from the RNA, forming a covalent enzyme-RNA intermediate. The proton acceptor active site deprotonates the incoming PreQ1, allowing a nucleophilic attack on the C1' of the ribose to form the product. After dissociation, two additional enzymatic reactions on the tRNA convert PreQ1 to queuine (Q), resulting in the hypermodified nucleoside queuosine (7-(((4,5-cis-dihydroxy-2-cyclopenten-1-yl)amino)methyl)-7-deazaguanosine).</text>
</comment>
<comment type="catalytic activity">
    <reaction evidence="1">
        <text>7-aminomethyl-7-carbaguanine + guanosine(34) in tRNA = 7-aminomethyl-7-carbaguanosine(34) in tRNA + guanine</text>
        <dbReference type="Rhea" id="RHEA:24104"/>
        <dbReference type="Rhea" id="RHEA-COMP:10341"/>
        <dbReference type="Rhea" id="RHEA-COMP:10342"/>
        <dbReference type="ChEBI" id="CHEBI:16235"/>
        <dbReference type="ChEBI" id="CHEBI:58703"/>
        <dbReference type="ChEBI" id="CHEBI:74269"/>
        <dbReference type="ChEBI" id="CHEBI:82833"/>
        <dbReference type="EC" id="2.4.2.29"/>
    </reaction>
</comment>
<comment type="cofactor">
    <cofactor evidence="1">
        <name>Zn(2+)</name>
        <dbReference type="ChEBI" id="CHEBI:29105"/>
    </cofactor>
    <text evidence="1">Binds 1 zinc ion per subunit.</text>
</comment>
<comment type="pathway">
    <text evidence="1">tRNA modification; tRNA-queuosine biosynthesis.</text>
</comment>
<comment type="subunit">
    <text evidence="1">Homodimer. Within each dimer, one monomer is responsible for RNA recognition and catalysis, while the other monomer binds to the replacement base PreQ1.</text>
</comment>
<comment type="similarity">
    <text evidence="1">Belongs to the queuine tRNA-ribosyltransferase family.</text>
</comment>
<gene>
    <name evidence="1" type="primary">tgt</name>
    <name type="ordered locus">PM0229</name>
</gene>
<protein>
    <recommendedName>
        <fullName evidence="1">Queuine tRNA-ribosyltransferase</fullName>
        <ecNumber evidence="1">2.4.2.29</ecNumber>
    </recommendedName>
    <alternativeName>
        <fullName evidence="1">Guanine insertion enzyme</fullName>
    </alternativeName>
    <alternativeName>
        <fullName evidence="1">tRNA-guanine transglycosylase</fullName>
    </alternativeName>
</protein>
<dbReference type="EC" id="2.4.2.29" evidence="1"/>
<dbReference type="EMBL" id="AE004439">
    <property type="protein sequence ID" value="AAK02313.1"/>
    <property type="molecule type" value="Genomic_DNA"/>
</dbReference>
<dbReference type="RefSeq" id="WP_010906534.1">
    <property type="nucleotide sequence ID" value="NC_002663.1"/>
</dbReference>
<dbReference type="SMR" id="P57831"/>
<dbReference type="STRING" id="272843.PM0229"/>
<dbReference type="EnsemblBacteria" id="AAK02313">
    <property type="protein sequence ID" value="AAK02313"/>
    <property type="gene ID" value="PM0229"/>
</dbReference>
<dbReference type="KEGG" id="pmu:PM0229"/>
<dbReference type="PATRIC" id="fig|272843.6.peg.237"/>
<dbReference type="HOGENOM" id="CLU_022060_0_1_6"/>
<dbReference type="OrthoDB" id="9805417at2"/>
<dbReference type="UniPathway" id="UPA00392"/>
<dbReference type="Proteomes" id="UP000000809">
    <property type="component" value="Chromosome"/>
</dbReference>
<dbReference type="GO" id="GO:0005829">
    <property type="term" value="C:cytosol"/>
    <property type="evidence" value="ECO:0007669"/>
    <property type="project" value="TreeGrafter"/>
</dbReference>
<dbReference type="GO" id="GO:0046872">
    <property type="term" value="F:metal ion binding"/>
    <property type="evidence" value="ECO:0007669"/>
    <property type="project" value="UniProtKB-KW"/>
</dbReference>
<dbReference type="GO" id="GO:0008479">
    <property type="term" value="F:tRNA-guanosine(34) queuine transglycosylase activity"/>
    <property type="evidence" value="ECO:0007669"/>
    <property type="project" value="UniProtKB-UniRule"/>
</dbReference>
<dbReference type="GO" id="GO:0008616">
    <property type="term" value="P:queuosine biosynthetic process"/>
    <property type="evidence" value="ECO:0007669"/>
    <property type="project" value="UniProtKB-UniRule"/>
</dbReference>
<dbReference type="GO" id="GO:0002099">
    <property type="term" value="P:tRNA wobble guanine modification"/>
    <property type="evidence" value="ECO:0007669"/>
    <property type="project" value="TreeGrafter"/>
</dbReference>
<dbReference type="GO" id="GO:0101030">
    <property type="term" value="P:tRNA-guanine transglycosylation"/>
    <property type="evidence" value="ECO:0007669"/>
    <property type="project" value="InterPro"/>
</dbReference>
<dbReference type="FunFam" id="3.20.20.105:FF:000001">
    <property type="entry name" value="Queuine tRNA-ribosyltransferase"/>
    <property type="match status" value="1"/>
</dbReference>
<dbReference type="Gene3D" id="3.20.20.105">
    <property type="entry name" value="Queuine tRNA-ribosyltransferase-like"/>
    <property type="match status" value="1"/>
</dbReference>
<dbReference type="HAMAP" id="MF_00168">
    <property type="entry name" value="Q_tRNA_Tgt"/>
    <property type="match status" value="1"/>
</dbReference>
<dbReference type="InterPro" id="IPR050076">
    <property type="entry name" value="ArchSynthase1/Queuine_TRR"/>
</dbReference>
<dbReference type="InterPro" id="IPR004803">
    <property type="entry name" value="TGT"/>
</dbReference>
<dbReference type="InterPro" id="IPR036511">
    <property type="entry name" value="TGT-like_sf"/>
</dbReference>
<dbReference type="InterPro" id="IPR002616">
    <property type="entry name" value="tRNA_ribo_trans-like"/>
</dbReference>
<dbReference type="NCBIfam" id="TIGR00430">
    <property type="entry name" value="Q_tRNA_tgt"/>
    <property type="match status" value="1"/>
</dbReference>
<dbReference type="NCBIfam" id="TIGR00449">
    <property type="entry name" value="tgt_general"/>
    <property type="match status" value="1"/>
</dbReference>
<dbReference type="PANTHER" id="PTHR46499">
    <property type="entry name" value="QUEUINE TRNA-RIBOSYLTRANSFERASE"/>
    <property type="match status" value="1"/>
</dbReference>
<dbReference type="PANTHER" id="PTHR46499:SF1">
    <property type="entry name" value="QUEUINE TRNA-RIBOSYLTRANSFERASE"/>
    <property type="match status" value="1"/>
</dbReference>
<dbReference type="Pfam" id="PF01702">
    <property type="entry name" value="TGT"/>
    <property type="match status" value="1"/>
</dbReference>
<dbReference type="SUPFAM" id="SSF51713">
    <property type="entry name" value="tRNA-guanine transglycosylase"/>
    <property type="match status" value="1"/>
</dbReference>
<feature type="chain" id="PRO_0000135500" description="Queuine tRNA-ribosyltransferase">
    <location>
        <begin position="1"/>
        <end position="385"/>
    </location>
</feature>
<feature type="region of interest" description="RNA binding" evidence="1">
    <location>
        <begin position="249"/>
        <end position="255"/>
    </location>
</feature>
<feature type="region of interest" description="RNA binding; important for wobble base 34 recognition" evidence="1">
    <location>
        <begin position="273"/>
        <end position="277"/>
    </location>
</feature>
<feature type="active site" description="Proton acceptor" evidence="1">
    <location>
        <position position="93"/>
    </location>
</feature>
<feature type="active site" description="Nucleophile" evidence="1">
    <location>
        <position position="268"/>
    </location>
</feature>
<feature type="binding site" evidence="1">
    <location>
        <begin position="93"/>
        <end position="97"/>
    </location>
    <ligand>
        <name>substrate</name>
    </ligand>
</feature>
<feature type="binding site" evidence="1">
    <location>
        <position position="147"/>
    </location>
    <ligand>
        <name>substrate</name>
    </ligand>
</feature>
<feature type="binding site" evidence="1">
    <location>
        <position position="191"/>
    </location>
    <ligand>
        <name>substrate</name>
    </ligand>
</feature>
<feature type="binding site" evidence="1">
    <location>
        <position position="218"/>
    </location>
    <ligand>
        <name>substrate</name>
    </ligand>
</feature>
<feature type="binding site" evidence="1">
    <location>
        <position position="306"/>
    </location>
    <ligand>
        <name>Zn(2+)</name>
        <dbReference type="ChEBI" id="CHEBI:29105"/>
    </ligand>
</feature>
<feature type="binding site" evidence="1">
    <location>
        <position position="308"/>
    </location>
    <ligand>
        <name>Zn(2+)</name>
        <dbReference type="ChEBI" id="CHEBI:29105"/>
    </ligand>
</feature>
<feature type="binding site" evidence="1">
    <location>
        <position position="311"/>
    </location>
    <ligand>
        <name>Zn(2+)</name>
        <dbReference type="ChEBI" id="CHEBI:29105"/>
    </ligand>
</feature>
<feature type="binding site" evidence="1">
    <location>
        <position position="337"/>
    </location>
    <ligand>
        <name>Zn(2+)</name>
        <dbReference type="ChEBI" id="CHEBI:29105"/>
    </ligand>
</feature>
<accession>P57831</accession>
<organism>
    <name type="scientific">Pasteurella multocida (strain Pm70)</name>
    <dbReference type="NCBI Taxonomy" id="272843"/>
    <lineage>
        <taxon>Bacteria</taxon>
        <taxon>Pseudomonadati</taxon>
        <taxon>Pseudomonadota</taxon>
        <taxon>Gammaproteobacteria</taxon>
        <taxon>Pasteurellales</taxon>
        <taxon>Pasteurellaceae</taxon>
        <taxon>Pasteurella</taxon>
    </lineage>
</organism>
<sequence>MKYELDKTDGNARRGRLVFERPQGTFTVETPAFMPVGTYGTVKGMTPEEVRATGAEILLGNTFHLWLRPGQEVMRKHGDLHDFMQWHRPILTDSGGFQVFSLGKLRKITEEGVKFQNPINGERIFLSPEKSMEIQYDLGSDIVMIFDECTPYPATFDYAKKSMEMSLRWAKRSRDRFDELGNKNALFGIIQGGVYEELRKVSVEGLVNIGFDGYAVGGLAVGEPKEDMHRILEYVCPQIPADKPRYLMGVGKPEDLVEGVRRGIDMFDCVMPTRNARNGHLFVSDGIVKIRNAKYREDTSPLDPECDCYTCKHYTKAYLYHLDKCGEILGARLNTIHNLRYYQRLMAQIRQAIEEDRFEAFVQEFYAKMGKPVPPMQSEIKSDEG</sequence>
<proteinExistence type="inferred from homology"/>
<evidence type="ECO:0000255" key="1">
    <source>
        <dbReference type="HAMAP-Rule" id="MF_00168"/>
    </source>
</evidence>